<keyword id="KW-0119">Carbohydrate metabolism</keyword>
<keyword id="KW-0328">Glycosyltransferase</keyword>
<keyword id="KW-1185">Reference proteome</keyword>
<keyword id="KW-0808">Transferase</keyword>
<sequence length="688" mass="76410">MSSALPPFRPSLVSDPLSARQDPSLPGILPVSAPILIEDIGPRVSDGRYPIKRVLGEGVVVSAAVFRDGHVPLAAALLWRRSPRPGEPAGGRGAWHEVPLTQIEPGLARWRARFDPPAIGRFDYLIEAWSDDWAGWRHDTLIKRDAGLDLSLEVLEGMALIEATIARIDGTDQAADQGLLSSWLADAQGLETAGGRATLMLSETLDAVMARHPDRSGAVRSGPPLSVVVDPPRAGFAAWYEMAPRSQASEPGRWGTFADCAARLPDIRAMGFDTLYLMPIHPIGRIHRKGPNNSLKAGPDDPGSPYAIGAAEGGHTAIHPELGTLDEFRALVAQAGEMGMDVALDIAIQCAPDHPWVSEHPEWFEFRPDGTIKYAENPPKKYQDIVNLAFWGPHRQELWLALLEVFTFWAEQGVRVFRVDNPHTKPVPFWEWLIATVKARYPDCIFLAEAFTRPPMMKMLAKIGFTQSYSYFTWRTTKAELTSYMEELVEDDPADYMRVNFFANTPDILPFHLQTGGRPAFMQRLVLAATLSSVYGIHNGFELCENAAIPGKEEYADSEKYDFKPRDWNAEGNIKDLIAKVNWIRNENPALQAFRTLRFFRADNDQILFYGKMTGDRANIILVAVNLDPHAGQGGLLWLPLAEMGLSDGQPFIVEELLSGTRLEWTGSPHHYWFDPATNPAAIFRITP</sequence>
<organism>
    <name type="scientific">Rhodospirillum rubrum (strain ATCC 11170 / ATH 1.1.1 / DSM 467 / LMG 4362 / NCIMB 8255 / S1)</name>
    <dbReference type="NCBI Taxonomy" id="269796"/>
    <lineage>
        <taxon>Bacteria</taxon>
        <taxon>Pseudomonadati</taxon>
        <taxon>Pseudomonadota</taxon>
        <taxon>Alphaproteobacteria</taxon>
        <taxon>Rhodospirillales</taxon>
        <taxon>Rhodospirillaceae</taxon>
        <taxon>Rhodospirillum</taxon>
    </lineage>
</organism>
<proteinExistence type="inferred from homology"/>
<protein>
    <recommendedName>
        <fullName evidence="1">Alpha-1,4-glucan:maltose-1-phosphate maltosyltransferase</fullName>
        <shortName evidence="1">GMPMT</shortName>
        <ecNumber evidence="1">2.4.99.16</ecNumber>
    </recommendedName>
    <alternativeName>
        <fullName evidence="1">(1-&gt;4)-alpha-D-glucan:maltose-1-phosphate alpha-D-maltosyltransferase</fullName>
    </alternativeName>
</protein>
<dbReference type="EC" id="2.4.99.16" evidence="1"/>
<dbReference type="EMBL" id="CP000230">
    <property type="protein sequence ID" value="ABC22404.1"/>
    <property type="molecule type" value="Genomic_DNA"/>
</dbReference>
<dbReference type="RefSeq" id="WP_011389479.1">
    <property type="nucleotide sequence ID" value="NC_007643.1"/>
</dbReference>
<dbReference type="RefSeq" id="YP_426691.1">
    <property type="nucleotide sequence ID" value="NC_007643.1"/>
</dbReference>
<dbReference type="SMR" id="Q2RTZ1"/>
<dbReference type="STRING" id="269796.Rru_A1604"/>
<dbReference type="CAZy" id="GH13">
    <property type="family name" value="Glycoside Hydrolase Family 13"/>
</dbReference>
<dbReference type="EnsemblBacteria" id="ABC22404">
    <property type="protein sequence ID" value="ABC22404"/>
    <property type="gene ID" value="Rru_A1604"/>
</dbReference>
<dbReference type="KEGG" id="rru:Rru_A1604"/>
<dbReference type="PATRIC" id="fig|269796.9.peg.1680"/>
<dbReference type="eggNOG" id="COG0366">
    <property type="taxonomic scope" value="Bacteria"/>
</dbReference>
<dbReference type="HOGENOM" id="CLU_015798_0_0_5"/>
<dbReference type="PhylomeDB" id="Q2RTZ1"/>
<dbReference type="Proteomes" id="UP000001929">
    <property type="component" value="Chromosome"/>
</dbReference>
<dbReference type="GO" id="GO:0016758">
    <property type="term" value="F:hexosyltransferase activity"/>
    <property type="evidence" value="ECO:0007669"/>
    <property type="project" value="UniProtKB-UniRule"/>
</dbReference>
<dbReference type="GO" id="GO:0004553">
    <property type="term" value="F:hydrolase activity, hydrolyzing O-glycosyl compounds"/>
    <property type="evidence" value="ECO:0007669"/>
    <property type="project" value="InterPro"/>
</dbReference>
<dbReference type="GO" id="GO:0030979">
    <property type="term" value="P:alpha-glucan biosynthetic process"/>
    <property type="evidence" value="ECO:0007669"/>
    <property type="project" value="UniProtKB-UniRule"/>
</dbReference>
<dbReference type="CDD" id="cd11344">
    <property type="entry name" value="AmyAc_GlgE_like"/>
    <property type="match status" value="1"/>
</dbReference>
<dbReference type="Gene3D" id="3.20.20.80">
    <property type="entry name" value="Glycosidases"/>
    <property type="match status" value="1"/>
</dbReference>
<dbReference type="Gene3D" id="2.60.40.1180">
    <property type="entry name" value="Golgi alpha-mannosidase II"/>
    <property type="match status" value="1"/>
</dbReference>
<dbReference type="Gene3D" id="2.60.40.10">
    <property type="entry name" value="Immunoglobulins"/>
    <property type="match status" value="1"/>
</dbReference>
<dbReference type="Gene3D" id="1.20.58.80">
    <property type="entry name" value="Phosphotransferase system, lactose/cellobiose-type IIA subunit"/>
    <property type="match status" value="1"/>
</dbReference>
<dbReference type="HAMAP" id="MF_02124">
    <property type="entry name" value="GlgE"/>
    <property type="match status" value="1"/>
</dbReference>
<dbReference type="InterPro" id="IPR026585">
    <property type="entry name" value="GlgE"/>
</dbReference>
<dbReference type="InterPro" id="IPR049171">
    <property type="entry name" value="GLGE_C"/>
</dbReference>
<dbReference type="InterPro" id="IPR021828">
    <property type="entry name" value="GlgE_dom_N/S"/>
</dbReference>
<dbReference type="InterPro" id="IPR006047">
    <property type="entry name" value="Glyco_hydro_13_cat_dom"/>
</dbReference>
<dbReference type="InterPro" id="IPR013780">
    <property type="entry name" value="Glyco_hydro_b"/>
</dbReference>
<dbReference type="InterPro" id="IPR017853">
    <property type="entry name" value="Glycoside_hydrolase_SF"/>
</dbReference>
<dbReference type="InterPro" id="IPR013783">
    <property type="entry name" value="Ig-like_fold"/>
</dbReference>
<dbReference type="PANTHER" id="PTHR47786">
    <property type="entry name" value="ALPHA-1,4-GLUCAN:MALTOSE-1-PHOSPHATE MALTOSYLTRANSFERASE"/>
    <property type="match status" value="1"/>
</dbReference>
<dbReference type="PANTHER" id="PTHR47786:SF2">
    <property type="entry name" value="GLYCOSYL HYDROLASE FAMILY 13 CATALYTIC DOMAIN-CONTAINING PROTEIN"/>
    <property type="match status" value="1"/>
</dbReference>
<dbReference type="Pfam" id="PF00128">
    <property type="entry name" value="Alpha-amylase"/>
    <property type="match status" value="1"/>
</dbReference>
<dbReference type="Pfam" id="PF21702">
    <property type="entry name" value="GLGE_C"/>
    <property type="match status" value="1"/>
</dbReference>
<dbReference type="Pfam" id="PF11896">
    <property type="entry name" value="GlgE_dom_N_S"/>
    <property type="match status" value="1"/>
</dbReference>
<dbReference type="SMART" id="SM00642">
    <property type="entry name" value="Aamy"/>
    <property type="match status" value="1"/>
</dbReference>
<dbReference type="SUPFAM" id="SSF51445">
    <property type="entry name" value="(Trans)glycosidases"/>
    <property type="match status" value="1"/>
</dbReference>
<reference key="1">
    <citation type="journal article" date="2011" name="Stand. Genomic Sci.">
        <title>Complete genome sequence of Rhodospirillum rubrum type strain (S1).</title>
        <authorList>
            <person name="Munk A.C."/>
            <person name="Copeland A."/>
            <person name="Lucas S."/>
            <person name="Lapidus A."/>
            <person name="Del Rio T.G."/>
            <person name="Barry K."/>
            <person name="Detter J.C."/>
            <person name="Hammon N."/>
            <person name="Israni S."/>
            <person name="Pitluck S."/>
            <person name="Brettin T."/>
            <person name="Bruce D."/>
            <person name="Han C."/>
            <person name="Tapia R."/>
            <person name="Gilna P."/>
            <person name="Schmutz J."/>
            <person name="Larimer F."/>
            <person name="Land M."/>
            <person name="Kyrpides N.C."/>
            <person name="Mavromatis K."/>
            <person name="Richardson P."/>
            <person name="Rohde M."/>
            <person name="Goeker M."/>
            <person name="Klenk H.P."/>
            <person name="Zhang Y."/>
            <person name="Roberts G.P."/>
            <person name="Reslewic S."/>
            <person name="Schwartz D.C."/>
        </authorList>
    </citation>
    <scope>NUCLEOTIDE SEQUENCE [LARGE SCALE GENOMIC DNA]</scope>
    <source>
        <strain>ATCC 11170 / ATH 1.1.1 / DSM 467 / LMG 4362 / NCIMB 8255 / S1</strain>
    </source>
</reference>
<comment type="function">
    <text evidence="1">Maltosyltransferase that uses maltose 1-phosphate (M1P) as the sugar donor to elongate linear or branched alpha-(1-&gt;4)-glucans. Is involved in a branched alpha-glucan biosynthetic pathway from trehalose, together with TreS, Mak and GlgB.</text>
</comment>
<comment type="catalytic activity">
    <reaction evidence="1">
        <text>alpha-maltose 1-phosphate + [(1-&gt;4)-alpha-D-glucosyl](n) = [(1-&gt;4)-alpha-D-glucosyl](n+2) + phosphate</text>
        <dbReference type="Rhea" id="RHEA:42692"/>
        <dbReference type="Rhea" id="RHEA-COMP:9584"/>
        <dbReference type="Rhea" id="RHEA-COMP:10183"/>
        <dbReference type="ChEBI" id="CHEBI:15444"/>
        <dbReference type="ChEBI" id="CHEBI:43474"/>
        <dbReference type="ChEBI" id="CHEBI:63576"/>
        <dbReference type="EC" id="2.4.99.16"/>
    </reaction>
</comment>
<comment type="subunit">
    <text evidence="1">Homodimer.</text>
</comment>
<comment type="similarity">
    <text evidence="1">Belongs to the glycosyl hydrolase 13 family. GlgE subfamily.</text>
</comment>
<name>GLGE_RHORT</name>
<gene>
    <name evidence="1" type="primary">glgE</name>
    <name type="ordered locus">Rru_A1604</name>
</gene>
<feature type="chain" id="PRO_0000413901" description="Alpha-1,4-glucan:maltose-1-phosphate maltosyltransferase">
    <location>
        <begin position="1"/>
        <end position="688"/>
    </location>
</feature>
<feature type="active site" description="Nucleophile" evidence="1">
    <location>
        <position position="420"/>
    </location>
</feature>
<feature type="active site" description="Proton donor" evidence="1">
    <location>
        <position position="449"/>
    </location>
</feature>
<feature type="binding site" evidence="1">
    <location>
        <position position="289"/>
    </location>
    <ligand>
        <name>alpha-maltose 1-phosphate</name>
        <dbReference type="ChEBI" id="CHEBI:63576"/>
    </ligand>
</feature>
<feature type="binding site" evidence="1">
    <location>
        <position position="349"/>
    </location>
    <ligand>
        <name>alpha-maltose 1-phosphate</name>
        <dbReference type="ChEBI" id="CHEBI:63576"/>
    </ligand>
</feature>
<feature type="binding site" evidence="1">
    <location>
        <position position="384"/>
    </location>
    <ligand>
        <name>alpha-maltose 1-phosphate</name>
        <dbReference type="ChEBI" id="CHEBI:63576"/>
    </ligand>
</feature>
<feature type="binding site" evidence="1">
    <location>
        <position position="421"/>
    </location>
    <ligand>
        <name>alpha-maltose 1-phosphate</name>
        <dbReference type="ChEBI" id="CHEBI:63576"/>
    </ligand>
</feature>
<feature type="binding site" evidence="1">
    <location>
        <begin position="560"/>
        <end position="561"/>
    </location>
    <ligand>
        <name>alpha-maltose 1-phosphate</name>
        <dbReference type="ChEBI" id="CHEBI:63576"/>
    </ligand>
</feature>
<feature type="site" description="Transition state stabilizer" evidence="1">
    <location>
        <position position="507"/>
    </location>
</feature>
<evidence type="ECO:0000255" key="1">
    <source>
        <dbReference type="HAMAP-Rule" id="MF_02124"/>
    </source>
</evidence>
<accession>Q2RTZ1</accession>